<proteinExistence type="evidence at protein level"/>
<feature type="transit peptide" description="Mitochondrion" evidence="5">
    <location>
        <begin position="1"/>
        <end position="7"/>
    </location>
</feature>
<feature type="chain" id="PRO_0000012289" description="Persulfide dioxygenase ETHE1, mitochondrial">
    <location>
        <begin position="8"/>
        <end position="254"/>
    </location>
</feature>
<feature type="binding site" evidence="7 9">
    <location>
        <position position="79"/>
    </location>
    <ligand>
        <name>Fe cation</name>
        <dbReference type="ChEBI" id="CHEBI:24875"/>
        <note>catalytic</note>
    </ligand>
</feature>
<feature type="binding site" evidence="7 9">
    <location>
        <position position="135"/>
    </location>
    <ligand>
        <name>Fe cation</name>
        <dbReference type="ChEBI" id="CHEBI:24875"/>
        <note>catalytic</note>
    </ligand>
</feature>
<feature type="binding site" evidence="7 9">
    <location>
        <position position="154"/>
    </location>
    <ligand>
        <name>Fe cation</name>
        <dbReference type="ChEBI" id="CHEBI:24875"/>
        <note>catalytic</note>
    </ligand>
</feature>
<feature type="modified residue" description="Phosphoserine" evidence="1">
    <location>
        <position position="14"/>
    </location>
</feature>
<feature type="modified residue" description="Phosphoserine" evidence="11">
    <location>
        <position position="19"/>
    </location>
</feature>
<feature type="modified residue" description="N6-acetyllysine" evidence="10">
    <location>
        <position position="66"/>
    </location>
</feature>
<feature type="modified residue" description="N6-acetyllysine; alternate" evidence="1">
    <location>
        <position position="172"/>
    </location>
</feature>
<feature type="modified residue" description="N6-succinyllysine; alternate" evidence="1">
    <location>
        <position position="172"/>
    </location>
</feature>
<feature type="sequence variant" id="VAR_023395" description="In EE; dbSNP:rs1555765564." evidence="3">
    <original>Y</original>
    <variation>C</variation>
    <location>
        <position position="38"/>
    </location>
</feature>
<feature type="sequence variant" id="VAR_069507" description="In EE; reduces protein stability; dbSNP:rs182983506." evidence="4">
    <original>L</original>
    <variation>P</variation>
    <location>
        <position position="55"/>
    </location>
</feature>
<feature type="sequence variant" id="VAR_023396" description="In EE; dbSNP:rs1284200516." evidence="3 4">
    <original>T</original>
    <variation>A</variation>
    <location>
        <position position="136"/>
    </location>
</feature>
<feature type="sequence variant" id="VAR_069508" description="In EE; reduces protein stability, iron content and enzyme activity; dbSNP:rs1317633085." evidence="4 6">
    <original>T</original>
    <variation>I</variation>
    <location>
        <position position="152"/>
    </location>
</feature>
<feature type="sequence variant" id="VAR_069509" description="In EE; dbSNP:rs745656120." evidence="4">
    <original>R</original>
    <variation>Q</variation>
    <location>
        <position position="163"/>
    </location>
</feature>
<feature type="sequence variant" id="VAR_023397" description="In EE; dbSNP:rs28940289." evidence="3 4">
    <original>R</original>
    <variation>W</variation>
    <location>
        <position position="163"/>
    </location>
</feature>
<feature type="sequence variant" id="VAR_069510" description="In EE; reduces protein stability; dbSNP:rs1268640442." evidence="4">
    <original>T</original>
    <variation>K</variation>
    <location>
        <position position="164"/>
    </location>
</feature>
<feature type="sequence variant" id="VAR_023398" description="In EE; dbSNP:rs387906987." evidence="3 4">
    <original>L</original>
    <variation>R</variation>
    <location>
        <position position="185"/>
    </location>
</feature>
<feature type="sequence variant" id="VAR_069511" description="In EE; reduces protein stability and affinity for substrate; dbSNP:rs763799125." evidence="4 6">
    <original>D</original>
    <variation>N</variation>
    <location>
        <position position="196"/>
    </location>
</feature>
<feature type="strand" evidence="12">
    <location>
        <begin position="24"/>
        <end position="30"/>
    </location>
</feature>
<feature type="turn" evidence="12">
    <location>
        <begin position="31"/>
        <end position="34"/>
    </location>
</feature>
<feature type="strand" evidence="12">
    <location>
        <begin position="35"/>
        <end position="41"/>
    </location>
</feature>
<feature type="turn" evidence="12">
    <location>
        <begin position="43"/>
        <end position="45"/>
    </location>
</feature>
<feature type="strand" evidence="12">
    <location>
        <begin position="47"/>
        <end position="52"/>
    </location>
</feature>
<feature type="helix" evidence="12">
    <location>
        <begin position="55"/>
        <end position="57"/>
    </location>
</feature>
<feature type="helix" evidence="12">
    <location>
        <begin position="58"/>
        <end position="68"/>
    </location>
</feature>
<feature type="strand" evidence="12">
    <location>
        <begin position="71"/>
        <end position="76"/>
    </location>
</feature>
<feature type="strand" evidence="12">
    <location>
        <begin position="82"/>
        <end position="84"/>
    </location>
</feature>
<feature type="helix" evidence="12">
    <location>
        <begin position="88"/>
        <end position="94"/>
    </location>
</feature>
<feature type="strand" evidence="12">
    <location>
        <begin position="99"/>
        <end position="103"/>
    </location>
</feature>
<feature type="helix" evidence="12">
    <location>
        <begin position="104"/>
        <end position="106"/>
    </location>
</feature>
<feature type="strand" evidence="12">
    <location>
        <begin position="111"/>
        <end position="114"/>
    </location>
</feature>
<feature type="strand" evidence="12">
    <location>
        <begin position="119"/>
        <end position="122"/>
    </location>
</feature>
<feature type="strand" evidence="12">
    <location>
        <begin position="125"/>
        <end position="131"/>
    </location>
</feature>
<feature type="strand" evidence="12">
    <location>
        <begin position="134"/>
        <end position="136"/>
    </location>
</feature>
<feature type="strand" evidence="12">
    <location>
        <begin position="140"/>
        <end position="144"/>
    </location>
</feature>
<feature type="strand" evidence="12">
    <location>
        <begin position="147"/>
        <end position="153"/>
    </location>
</feature>
<feature type="helix" evidence="12">
    <location>
        <begin position="171"/>
        <end position="181"/>
    </location>
</feature>
<feature type="turn" evidence="12">
    <location>
        <begin position="182"/>
        <end position="184"/>
    </location>
</feature>
<feature type="strand" evidence="12">
    <location>
        <begin position="190"/>
        <end position="195"/>
    </location>
</feature>
<feature type="strand" evidence="12">
    <location>
        <begin position="197"/>
        <end position="199"/>
    </location>
</feature>
<feature type="helix" evidence="12">
    <location>
        <begin position="205"/>
        <end position="211"/>
    </location>
</feature>
<feature type="turn" evidence="12">
    <location>
        <begin position="213"/>
        <end position="216"/>
    </location>
</feature>
<feature type="helix" evidence="12">
    <location>
        <begin position="219"/>
        <end position="228"/>
    </location>
</feature>
<feature type="helix" evidence="12">
    <location>
        <begin position="237"/>
        <end position="245"/>
    </location>
</feature>
<feature type="turn" evidence="12">
    <location>
        <begin position="246"/>
        <end position="248"/>
    </location>
</feature>
<accession>O95571</accession>
<accession>Q96HR0</accession>
<accession>Q9H001</accession>
<keyword id="KW-0002">3D-structure</keyword>
<keyword id="KW-0007">Acetylation</keyword>
<keyword id="KW-0963">Cytoplasm</keyword>
<keyword id="KW-0223">Dioxygenase</keyword>
<keyword id="KW-0225">Disease variant</keyword>
<keyword id="KW-0408">Iron</keyword>
<keyword id="KW-0479">Metal-binding</keyword>
<keyword id="KW-0496">Mitochondrion</keyword>
<keyword id="KW-0539">Nucleus</keyword>
<keyword id="KW-0560">Oxidoreductase</keyword>
<keyword id="KW-0597">Phosphoprotein</keyword>
<keyword id="KW-1267">Proteomics identification</keyword>
<keyword id="KW-1185">Reference proteome</keyword>
<keyword id="KW-0809">Transit peptide</keyword>
<gene>
    <name type="primary">ETHE1</name>
    <name type="synonym">HSCO</name>
</gene>
<evidence type="ECO:0000250" key="1">
    <source>
        <dbReference type="UniProtKB" id="Q9DCM0"/>
    </source>
</evidence>
<evidence type="ECO:0000269" key="2">
    <source>
    </source>
</evidence>
<evidence type="ECO:0000269" key="3">
    <source>
    </source>
</evidence>
<evidence type="ECO:0000269" key="4">
    <source>
    </source>
</evidence>
<evidence type="ECO:0000269" key="5">
    <source>
    </source>
</evidence>
<evidence type="ECO:0000269" key="6">
    <source>
    </source>
</evidence>
<evidence type="ECO:0000269" key="7">
    <source>
    </source>
</evidence>
<evidence type="ECO:0000305" key="8"/>
<evidence type="ECO:0007744" key="9">
    <source>
        <dbReference type="PDB" id="4CHL"/>
    </source>
</evidence>
<evidence type="ECO:0007744" key="10">
    <source>
    </source>
</evidence>
<evidence type="ECO:0007744" key="11">
    <source>
    </source>
</evidence>
<evidence type="ECO:0007829" key="12">
    <source>
        <dbReference type="PDB" id="4CHL"/>
    </source>
</evidence>
<name>ETHE1_HUMAN</name>
<organism>
    <name type="scientific">Homo sapiens</name>
    <name type="common">Human</name>
    <dbReference type="NCBI Taxonomy" id="9606"/>
    <lineage>
        <taxon>Eukaryota</taxon>
        <taxon>Metazoa</taxon>
        <taxon>Chordata</taxon>
        <taxon>Craniata</taxon>
        <taxon>Vertebrata</taxon>
        <taxon>Euteleostomi</taxon>
        <taxon>Mammalia</taxon>
        <taxon>Eutheria</taxon>
        <taxon>Euarchontoglires</taxon>
        <taxon>Primates</taxon>
        <taxon>Haplorrhini</taxon>
        <taxon>Catarrhini</taxon>
        <taxon>Hominidae</taxon>
        <taxon>Homo</taxon>
    </lineage>
</organism>
<reference key="1">
    <citation type="journal article" date="2002" name="Cancer Cell">
        <title>A novel protein overexpressed in hepatoma accelerates export of NF-kappa B from the nucleus and inhibits p53-dependent apoptosis.</title>
        <authorList>
            <person name="Higashitsuji H."/>
            <person name="Higashitsuji H."/>
            <person name="Nagao T."/>
            <person name="Nonoguchi K."/>
            <person name="Fujii S."/>
            <person name="Itoh K."/>
            <person name="Fujita J."/>
        </authorList>
    </citation>
    <scope>NUCLEOTIDE SEQUENCE [MRNA]</scope>
    <scope>SUBCELLULAR LOCATION</scope>
    <scope>INTERACTION WITH RELA</scope>
    <scope>FUNCTION</scope>
    <scope>ABSENCE OF GLYOXALASE II ACTIVITY</scope>
    <source>
        <tissue>Liver</tissue>
    </source>
</reference>
<reference key="2">
    <citation type="journal article" date="2004" name="Am. J. Hum. Genet.">
        <title>Ethylmalonic encephalopathy is caused by mutations in ETHE1, a gene encoding a mitochondrial matrix protein.</title>
        <authorList>
            <person name="Tiranti V."/>
            <person name="D'Adamo P."/>
            <person name="Briem E."/>
            <person name="Ferrari G."/>
            <person name="Mineri R."/>
            <person name="Lamantea E."/>
            <person name="Mandel H."/>
            <person name="Balestri P."/>
            <person name="Garcia-Silva M.-T."/>
            <person name="Vollmer B."/>
            <person name="Rinaldo P."/>
            <person name="Hahn S.H."/>
            <person name="Leonard J."/>
            <person name="Rahman S."/>
            <person name="Dionisi-Vici C."/>
            <person name="Garavaglia B."/>
            <person name="Gasparini P."/>
            <person name="Zeviani M."/>
        </authorList>
    </citation>
    <scope>NUCLEOTIDE SEQUENCE [MRNA]</scope>
    <scope>SUBCELLULAR LOCATION</scope>
    <scope>TISSUE SPECIFICITY</scope>
    <scope>FUNCTION</scope>
    <scope>ABSENCE OF GLYOXALASE II ACTIVITY</scope>
    <scope>VARIANTS EE CYS-38; ALA-136; TRP-163 AND ARG-185</scope>
</reference>
<reference key="3">
    <citation type="journal article" date="2004" name="Nature">
        <title>The DNA sequence and biology of human chromosome 19.</title>
        <authorList>
            <person name="Grimwood J."/>
            <person name="Gordon L.A."/>
            <person name="Olsen A.S."/>
            <person name="Terry A."/>
            <person name="Schmutz J."/>
            <person name="Lamerdin J.E."/>
            <person name="Hellsten U."/>
            <person name="Goodstein D."/>
            <person name="Couronne O."/>
            <person name="Tran-Gyamfi M."/>
            <person name="Aerts A."/>
            <person name="Altherr M."/>
            <person name="Ashworth L."/>
            <person name="Bajorek E."/>
            <person name="Black S."/>
            <person name="Branscomb E."/>
            <person name="Caenepeel S."/>
            <person name="Carrano A.V."/>
            <person name="Caoile C."/>
            <person name="Chan Y.M."/>
            <person name="Christensen M."/>
            <person name="Cleland C.A."/>
            <person name="Copeland A."/>
            <person name="Dalin E."/>
            <person name="Dehal P."/>
            <person name="Denys M."/>
            <person name="Detter J.C."/>
            <person name="Escobar J."/>
            <person name="Flowers D."/>
            <person name="Fotopulos D."/>
            <person name="Garcia C."/>
            <person name="Georgescu A.M."/>
            <person name="Glavina T."/>
            <person name="Gomez M."/>
            <person name="Gonzales E."/>
            <person name="Groza M."/>
            <person name="Hammon N."/>
            <person name="Hawkins T."/>
            <person name="Haydu L."/>
            <person name="Ho I."/>
            <person name="Huang W."/>
            <person name="Israni S."/>
            <person name="Jett J."/>
            <person name="Kadner K."/>
            <person name="Kimball H."/>
            <person name="Kobayashi A."/>
            <person name="Larionov V."/>
            <person name="Leem S.-H."/>
            <person name="Lopez F."/>
            <person name="Lou Y."/>
            <person name="Lowry S."/>
            <person name="Malfatti S."/>
            <person name="Martinez D."/>
            <person name="McCready P.M."/>
            <person name="Medina C."/>
            <person name="Morgan J."/>
            <person name="Nelson K."/>
            <person name="Nolan M."/>
            <person name="Ovcharenko I."/>
            <person name="Pitluck S."/>
            <person name="Pollard M."/>
            <person name="Popkie A.P."/>
            <person name="Predki P."/>
            <person name="Quan G."/>
            <person name="Ramirez L."/>
            <person name="Rash S."/>
            <person name="Retterer J."/>
            <person name="Rodriguez A."/>
            <person name="Rogers S."/>
            <person name="Salamov A."/>
            <person name="Salazar A."/>
            <person name="She X."/>
            <person name="Smith D."/>
            <person name="Slezak T."/>
            <person name="Solovyev V."/>
            <person name="Thayer N."/>
            <person name="Tice H."/>
            <person name="Tsai M."/>
            <person name="Ustaszewska A."/>
            <person name="Vo N."/>
            <person name="Wagner M."/>
            <person name="Wheeler J."/>
            <person name="Wu K."/>
            <person name="Xie G."/>
            <person name="Yang J."/>
            <person name="Dubchak I."/>
            <person name="Furey T.S."/>
            <person name="DeJong P."/>
            <person name="Dickson M."/>
            <person name="Gordon D."/>
            <person name="Eichler E.E."/>
            <person name="Pennacchio L.A."/>
            <person name="Richardson P."/>
            <person name="Stubbs L."/>
            <person name="Rokhsar D.S."/>
            <person name="Myers R.M."/>
            <person name="Rubin E.M."/>
            <person name="Lucas S.M."/>
        </authorList>
    </citation>
    <scope>NUCLEOTIDE SEQUENCE [LARGE SCALE GENOMIC DNA]</scope>
</reference>
<reference key="4">
    <citation type="journal article" date="2004" name="Genome Res.">
        <title>The status, quality, and expansion of the NIH full-length cDNA project: the Mammalian Gene Collection (MGC).</title>
        <authorList>
            <consortium name="The MGC Project Team"/>
        </authorList>
    </citation>
    <scope>NUCLEOTIDE SEQUENCE [LARGE SCALE MRNA]</scope>
    <source>
        <tissue>Eye</tissue>
    </source>
</reference>
<reference key="5">
    <citation type="journal article" date="2009" name="Nat. Med.">
        <title>Loss of ETHE1, a mitochondrial dioxygenase, causes fatal sulfide toxicity in ethylmalonic encephalopathy.</title>
        <authorList>
            <person name="Tiranti V."/>
            <person name="Viscomi C."/>
            <person name="Hildebrandt T."/>
            <person name="Di Meo I."/>
            <person name="Mineri R."/>
            <person name="Tiveron C."/>
            <person name="Levitt M.D."/>
            <person name="Prelle A."/>
            <person name="Fagiolari G."/>
            <person name="Rimoldi M."/>
            <person name="Zeviani M."/>
        </authorList>
    </citation>
    <scope>FUNCTION</scope>
    <scope>CATALYTIC ACTIVITY</scope>
    <scope>COFACTOR</scope>
    <scope>ROLE IN DISEASE</scope>
    <scope>SUBCELLULAR LOCATION</scope>
    <scope>TRANSIT PEPTIDE CLEAVAGE SITE</scope>
    <scope>IDENTIFICATION BY MASS SPECTROMETRY</scope>
    <scope>INTERACTION WITH TST</scope>
</reference>
<reference key="6">
    <citation type="journal article" date="2009" name="Science">
        <title>Lysine acetylation targets protein complexes and co-regulates major cellular functions.</title>
        <authorList>
            <person name="Choudhary C."/>
            <person name="Kumar C."/>
            <person name="Gnad F."/>
            <person name="Nielsen M.L."/>
            <person name="Rehman M."/>
            <person name="Walther T.C."/>
            <person name="Olsen J.V."/>
            <person name="Mann M."/>
        </authorList>
    </citation>
    <scope>ACETYLATION [LARGE SCALE ANALYSIS] AT LYS-66</scope>
    <scope>IDENTIFICATION BY MASS SPECTROMETRY [LARGE SCALE ANALYSIS]</scope>
</reference>
<reference key="7">
    <citation type="journal article" date="2011" name="BMC Syst. Biol.">
        <title>Initial characterization of the human central proteome.</title>
        <authorList>
            <person name="Burkard T.R."/>
            <person name="Planyavsky M."/>
            <person name="Kaupe I."/>
            <person name="Breitwieser F.P."/>
            <person name="Buerckstuemmer T."/>
            <person name="Bennett K.L."/>
            <person name="Superti-Furga G."/>
            <person name="Colinge J."/>
        </authorList>
    </citation>
    <scope>IDENTIFICATION BY MASS SPECTROMETRY [LARGE SCALE ANALYSIS]</scope>
</reference>
<reference key="8">
    <citation type="journal article" date="2012" name="J. Biol. Chem.">
        <title>Characterization of patient mutations in human persulfide dioxygenase (ETHE1) involved in H2S catabolism.</title>
        <authorList>
            <person name="Kabil O."/>
            <person name="Banerjee R."/>
        </authorList>
    </citation>
    <scope>FUNCTION</scope>
    <scope>CATALYTIC ACTIVITY</scope>
    <scope>COFACTOR</scope>
    <scope>BIOPHYSICOCHEMICAL PROPERTIES</scope>
    <scope>SUBUNIT</scope>
    <scope>ACTIVITY REGULATION</scope>
    <scope>CHARACTERIZATION OF VARIANTS EE ILE-152 AND ASN-196</scope>
</reference>
<reference key="9">
    <citation type="journal article" date="2014" name="J. Proteomics">
        <title>An enzyme assisted RP-RPLC approach for in-depth analysis of human liver phosphoproteome.</title>
        <authorList>
            <person name="Bian Y."/>
            <person name="Song C."/>
            <person name="Cheng K."/>
            <person name="Dong M."/>
            <person name="Wang F."/>
            <person name="Huang J."/>
            <person name="Sun D."/>
            <person name="Wang L."/>
            <person name="Ye M."/>
            <person name="Zou H."/>
        </authorList>
    </citation>
    <scope>PHOSPHORYLATION [LARGE SCALE ANALYSIS] AT SER-19</scope>
    <scope>IDENTIFICATION BY MASS SPECTROMETRY [LARGE SCALE ANALYSIS]</scope>
    <source>
        <tissue>Liver</tissue>
    </source>
</reference>
<reference key="10">
    <citation type="journal article" date="2015" name="Proteomics">
        <title>N-terminome analysis of the human mitochondrial proteome.</title>
        <authorList>
            <person name="Vaca Jacome A.S."/>
            <person name="Rabilloud T."/>
            <person name="Schaeffer-Reiss C."/>
            <person name="Rompais M."/>
            <person name="Ayoub D."/>
            <person name="Lane L."/>
            <person name="Bairoch A."/>
            <person name="Van Dorsselaer A."/>
            <person name="Carapito C."/>
        </authorList>
    </citation>
    <scope>IDENTIFICATION BY MASS SPECTROMETRY [LARGE SCALE ANALYSIS]</scope>
</reference>
<reference evidence="9" key="11">
    <citation type="journal article" date="2015" name="Hum. Mol. Genet.">
        <title>Crystal structure of human persulfide dioxygenase: structural basis of ethylmalonic encephalopathy.</title>
        <authorList>
            <person name="Pettinati I."/>
            <person name="Brem J."/>
            <person name="McDonough M.A."/>
            <person name="Schofield C.J."/>
        </authorList>
    </citation>
    <scope>X-RAY CRYSTALLOGRAPHY (2.61 ANGSTROMS) OF 21-254 IN COMPLEX WITH IRON</scope>
    <scope>CATALYTIC ACTIVITY</scope>
    <scope>COFACTOR</scope>
    <scope>SUBUNIT</scope>
    <scope>DISULFIDE BONDS</scope>
</reference>
<reference key="12">
    <citation type="journal article" date="2008" name="J. Med. Genet.">
        <title>Identification of new mutations in the ETHE1 gene in a cohort of 14 patients presenting with ethylmalonic encephalopathy.</title>
        <authorList>
            <person name="Mineri R."/>
            <person name="Rimoldi M."/>
            <person name="Burlina A.B."/>
            <person name="Koskull S."/>
            <person name="Perletti C."/>
            <person name="Heese B."/>
            <person name="von Dobeln U."/>
            <person name="Mereghetti P."/>
            <person name="Di Meo I."/>
            <person name="Invernizzi F."/>
            <person name="Zeviani M."/>
            <person name="Uziel G."/>
            <person name="Tiranti V."/>
        </authorList>
    </citation>
    <scope>VARIANTS EE PRO-55; ALA-136; ILE-152; GLN-163; TRP-163; LYS-164; ARG-185 AND ASN-196</scope>
    <scope>CHARACTERIZATION OF VARIANTS EE PRO-55 AND LYS-164</scope>
</reference>
<comment type="function">
    <text evidence="2 3 5 6">Sulfur dioxygenase that plays an essential role in hydrogen sulfide catabolism in the mitochondrial matrix. Hydrogen sulfide (H(2)S) is first oxidized by SQRDL, giving rise to cysteine persulfide residues. ETHE1 consumes molecular oxygen to catalyze the oxidation of the persulfide, once it has been transferred to a thiophilic acceptor, such as glutathione (R-SSH). Plays an important role in metabolic homeostasis in mitochondria by metabolizing hydrogen sulfide and preventing the accumulation of supraphysiological H(2)S levels that have toxic effects, due to the inhibition of cytochrome c oxidase. First described as a protein that can shuttle between the nucleus and the cytoplasm and suppress p53-induced apoptosis by sequestering the transcription factor RELA/NFKB3 in the cytoplasm and preventing its accumulation in the nucleus (PubMed:12398897).</text>
</comment>
<comment type="catalytic activity">
    <reaction evidence="5 6 7">
        <text>S-sulfanylglutathione + O2 + H2O = sulfite + glutathione + 2 H(+)</text>
        <dbReference type="Rhea" id="RHEA:12981"/>
        <dbReference type="ChEBI" id="CHEBI:15377"/>
        <dbReference type="ChEBI" id="CHEBI:15378"/>
        <dbReference type="ChEBI" id="CHEBI:15379"/>
        <dbReference type="ChEBI" id="CHEBI:17359"/>
        <dbReference type="ChEBI" id="CHEBI:57925"/>
        <dbReference type="ChEBI" id="CHEBI:58905"/>
        <dbReference type="EC" id="1.13.11.18"/>
    </reaction>
</comment>
<comment type="cofactor">
    <cofactor evidence="5 6 7">
        <name>Fe(2+)</name>
        <dbReference type="ChEBI" id="CHEBI:29033"/>
    </cofactor>
    <text evidence="5 6 7">Binds 1 Fe(2+) ion per subunit.</text>
</comment>
<comment type="activity regulation">
    <text evidence="6">Glutathione increases enzyme activity.</text>
</comment>
<comment type="biophysicochemical properties">
    <kinetics>
        <KM evidence="6">0.34 mM for glutathione persulfide (GSSH)</KM>
        <Vmax evidence="6">113.0 umol/min/mg enzyme (in the presence of equimolar amounts of GSSH and GSH and at 22 degrees Celsius)</Vmax>
    </kinetics>
</comment>
<comment type="subunit">
    <text evidence="2 5 6 7">Homodimer (PubMed:25596185). Monomer (PubMed:23144459). Interacts with TST (PubMed:19136963). May interact with RELA (PubMed:12398897).</text>
</comment>
<comment type="interaction">
    <interactant intactId="EBI-715318">
        <id>O95571</id>
    </interactant>
    <interactant intactId="EBI-12006308">
        <id>Q7Z3C6-3</id>
        <label>ATG9A</label>
    </interactant>
    <organismsDiffer>false</organismsDiffer>
    <experiments>3</experiments>
</comment>
<comment type="interaction">
    <interactant intactId="EBI-715318">
        <id>O95571</id>
    </interactant>
    <interactant intactId="EBI-715318">
        <id>O95571</id>
        <label>ETHE1</label>
    </interactant>
    <organismsDiffer>false</organismsDiffer>
    <experiments>3</experiments>
</comment>
<comment type="interaction">
    <interactant intactId="EBI-715318">
        <id>O95571</id>
    </interactant>
    <interactant intactId="EBI-739467">
        <id>Q9H8Y8</id>
        <label>GORASP2</label>
    </interactant>
    <organismsDiffer>false</organismsDiffer>
    <experiments>3</experiments>
</comment>
<comment type="interaction">
    <interactant intactId="EBI-715318">
        <id>O95571</id>
    </interactant>
    <interactant intactId="EBI-12196745">
        <id>Q3LHN2</id>
        <label>KRTAP19-2</label>
    </interactant>
    <organismsDiffer>false</organismsDiffer>
    <experiments>3</experiments>
</comment>
<comment type="interaction">
    <interactant intactId="EBI-715318">
        <id>O95571</id>
    </interactant>
    <interactant intactId="EBI-2932492">
        <id>Q99757</id>
        <label>TXN2</label>
    </interactant>
    <organismsDiffer>false</organismsDiffer>
    <experiments>3</experiments>
</comment>
<comment type="subcellular location">
    <subcellularLocation>
        <location evidence="2">Cytoplasm</location>
    </subcellularLocation>
    <subcellularLocation>
        <location evidence="2">Nucleus</location>
    </subcellularLocation>
    <subcellularLocation>
        <location evidence="3">Mitochondrion matrix</location>
    </subcellularLocation>
</comment>
<comment type="tissue specificity">
    <text evidence="3">Ubiquitously expressed.</text>
</comment>
<comment type="disease" evidence="3 4 6">
    <disease id="DI-01539">
        <name>Ethylmalonic encephalopathy</name>
        <acronym>EE</acronym>
        <description>Autosomal recessive disorder characterized by neurodevelopmental delay and regression, recurrent petechiae, acrocyanosis, diarrhea, leading to death in the first decade of life. It is also associated with persistent lactic acidemia and ethylmalonic and methylsuccinic aciduria.</description>
        <dbReference type="MIM" id="602473"/>
    </disease>
    <text>The disease is caused by variants affecting the gene represented in this entry.</text>
</comment>
<comment type="similarity">
    <text evidence="8">Belongs to the metallo-beta-lactamase superfamily. Glyoxalase II family.</text>
</comment>
<comment type="sequence caution" evidence="8">
    <conflict type="erroneous gene model prediction">
        <sequence resource="EMBL-CDS" id="AAG09063"/>
    </conflict>
</comment>
<dbReference type="EC" id="1.13.11.18" evidence="5 6 7"/>
<dbReference type="EMBL" id="D83198">
    <property type="protein sequence ID" value="BAA34595.2"/>
    <property type="molecule type" value="mRNA"/>
</dbReference>
<dbReference type="EMBL" id="AC018758">
    <property type="protein sequence ID" value="AAG09063.1"/>
    <property type="status" value="ALT_SEQ"/>
    <property type="molecule type" value="Genomic_DNA"/>
</dbReference>
<dbReference type="EMBL" id="BC008250">
    <property type="protein sequence ID" value="AAH08250.1"/>
    <property type="molecule type" value="mRNA"/>
</dbReference>
<dbReference type="CCDS" id="CCDS12622.1"/>
<dbReference type="RefSeq" id="NP_001307796.1">
    <property type="nucleotide sequence ID" value="NM_001320867.1"/>
</dbReference>
<dbReference type="RefSeq" id="NP_001307797.1">
    <property type="nucleotide sequence ID" value="NM_001320868.1"/>
</dbReference>
<dbReference type="RefSeq" id="NP_001307798.1">
    <property type="nucleotide sequence ID" value="NM_001320869.1"/>
</dbReference>
<dbReference type="RefSeq" id="NP_055112.2">
    <property type="nucleotide sequence ID" value="NM_014297.4"/>
</dbReference>
<dbReference type="RefSeq" id="XP_005258744.1">
    <property type="nucleotide sequence ID" value="XM_005258687.3"/>
</dbReference>
<dbReference type="PDB" id="4CHL">
    <property type="method" value="X-ray"/>
    <property type="resolution" value="2.61 A"/>
    <property type="chains" value="A/B=21-254"/>
</dbReference>
<dbReference type="PDBsum" id="4CHL"/>
<dbReference type="SASBDB" id="O95571"/>
<dbReference type="SMR" id="O95571"/>
<dbReference type="BioGRID" id="117034">
    <property type="interactions" value="56"/>
</dbReference>
<dbReference type="FunCoup" id="O95571">
    <property type="interactions" value="1229"/>
</dbReference>
<dbReference type="IntAct" id="O95571">
    <property type="interactions" value="12"/>
</dbReference>
<dbReference type="MINT" id="O95571"/>
<dbReference type="STRING" id="9606.ENSP00000292147"/>
<dbReference type="GlyGen" id="O95571">
    <property type="glycosylation" value="1 site, 1 O-linked glycan (1 site)"/>
</dbReference>
<dbReference type="iPTMnet" id="O95571"/>
<dbReference type="MetOSite" id="O95571"/>
<dbReference type="PhosphoSitePlus" id="O95571"/>
<dbReference type="SwissPalm" id="O95571"/>
<dbReference type="BioMuta" id="ETHE1"/>
<dbReference type="jPOST" id="O95571"/>
<dbReference type="MassIVE" id="O95571"/>
<dbReference type="PaxDb" id="9606-ENSP00000292147"/>
<dbReference type="PeptideAtlas" id="O95571"/>
<dbReference type="ProteomicsDB" id="50945"/>
<dbReference type="Pumba" id="O95571"/>
<dbReference type="Antibodypedia" id="31059">
    <property type="antibodies" value="255 antibodies from 27 providers"/>
</dbReference>
<dbReference type="DNASU" id="23474"/>
<dbReference type="Ensembl" id="ENST00000292147.7">
    <property type="protein sequence ID" value="ENSP00000292147.1"/>
    <property type="gene ID" value="ENSG00000105755.8"/>
</dbReference>
<dbReference type="GeneID" id="23474"/>
<dbReference type="KEGG" id="hsa:23474"/>
<dbReference type="MANE-Select" id="ENST00000292147.7">
    <property type="protein sequence ID" value="ENSP00000292147.1"/>
    <property type="RefSeq nucleotide sequence ID" value="NM_014297.5"/>
    <property type="RefSeq protein sequence ID" value="NP_055112.2"/>
</dbReference>
<dbReference type="UCSC" id="uc002owp.3">
    <property type="organism name" value="human"/>
</dbReference>
<dbReference type="AGR" id="HGNC:23287"/>
<dbReference type="CTD" id="23474"/>
<dbReference type="DisGeNET" id="23474"/>
<dbReference type="GeneCards" id="ETHE1"/>
<dbReference type="GeneReviews" id="ETHE1"/>
<dbReference type="HGNC" id="HGNC:23287">
    <property type="gene designation" value="ETHE1"/>
</dbReference>
<dbReference type="HPA" id="ENSG00000105755">
    <property type="expression patterns" value="Tissue enhanced (intestine)"/>
</dbReference>
<dbReference type="MalaCards" id="ETHE1"/>
<dbReference type="MIM" id="602473">
    <property type="type" value="phenotype"/>
</dbReference>
<dbReference type="MIM" id="608451">
    <property type="type" value="gene"/>
</dbReference>
<dbReference type="neXtProt" id="NX_O95571"/>
<dbReference type="OpenTargets" id="ENSG00000105755"/>
<dbReference type="Orphanet" id="51188">
    <property type="disease" value="Ethylmalonic encephalopathy"/>
</dbReference>
<dbReference type="PharmGKB" id="PA134879650"/>
<dbReference type="VEuPathDB" id="HostDB:ENSG00000105755"/>
<dbReference type="eggNOG" id="KOG0814">
    <property type="taxonomic scope" value="Eukaryota"/>
</dbReference>
<dbReference type="GeneTree" id="ENSGT00940000159046"/>
<dbReference type="HOGENOM" id="CLU_030571_7_0_1"/>
<dbReference type="InParanoid" id="O95571"/>
<dbReference type="OMA" id="VMDIDYA"/>
<dbReference type="OrthoDB" id="449487at2759"/>
<dbReference type="PAN-GO" id="O95571">
    <property type="GO annotations" value="4 GO annotations based on evolutionary models"/>
</dbReference>
<dbReference type="PhylomeDB" id="O95571"/>
<dbReference type="TreeFam" id="TF312952"/>
<dbReference type="BioCyc" id="MetaCyc:ENSG00000105755-MONOMER"/>
<dbReference type="PathwayCommons" id="O95571"/>
<dbReference type="Reactome" id="R-HSA-1614517">
    <property type="pathway name" value="Sulfide oxidation to sulfate"/>
</dbReference>
<dbReference type="SABIO-RK" id="O95571"/>
<dbReference type="SignaLink" id="O95571"/>
<dbReference type="BioGRID-ORCS" id="23474">
    <property type="hits" value="17 hits in 1163 CRISPR screens"/>
</dbReference>
<dbReference type="ChiTaRS" id="ETHE1">
    <property type="organism name" value="human"/>
</dbReference>
<dbReference type="EvolutionaryTrace" id="O95571"/>
<dbReference type="GeneWiki" id="ETHE1"/>
<dbReference type="GenomeRNAi" id="23474"/>
<dbReference type="Pharos" id="O95571">
    <property type="development level" value="Tbio"/>
</dbReference>
<dbReference type="PRO" id="PR:O95571"/>
<dbReference type="Proteomes" id="UP000005640">
    <property type="component" value="Chromosome 19"/>
</dbReference>
<dbReference type="RNAct" id="O95571">
    <property type="molecule type" value="protein"/>
</dbReference>
<dbReference type="Bgee" id="ENSG00000105755">
    <property type="expression patterns" value="Expressed in mucosa of transverse colon and 194 other cell types or tissues"/>
</dbReference>
<dbReference type="ExpressionAtlas" id="O95571">
    <property type="expression patterns" value="baseline and differential"/>
</dbReference>
<dbReference type="GO" id="GO:0005737">
    <property type="term" value="C:cytoplasm"/>
    <property type="evidence" value="ECO:0000314"/>
    <property type="project" value="LIFEdb"/>
</dbReference>
<dbReference type="GO" id="GO:0005759">
    <property type="term" value="C:mitochondrial matrix"/>
    <property type="evidence" value="ECO:0000304"/>
    <property type="project" value="Reactome"/>
</dbReference>
<dbReference type="GO" id="GO:0005739">
    <property type="term" value="C:mitochondrion"/>
    <property type="evidence" value="ECO:0000314"/>
    <property type="project" value="HPA"/>
</dbReference>
<dbReference type="GO" id="GO:0005654">
    <property type="term" value="C:nucleoplasm"/>
    <property type="evidence" value="ECO:0000314"/>
    <property type="project" value="HPA"/>
</dbReference>
<dbReference type="GO" id="GO:0042802">
    <property type="term" value="F:identical protein binding"/>
    <property type="evidence" value="ECO:0000353"/>
    <property type="project" value="IntAct"/>
</dbReference>
<dbReference type="GO" id="GO:0005506">
    <property type="term" value="F:iron ion binding"/>
    <property type="evidence" value="ECO:0000314"/>
    <property type="project" value="UniProtKB"/>
</dbReference>
<dbReference type="GO" id="GO:0050313">
    <property type="term" value="F:sulfur dioxygenase activity"/>
    <property type="evidence" value="ECO:0000314"/>
    <property type="project" value="UniProtKB"/>
</dbReference>
<dbReference type="GO" id="GO:0006749">
    <property type="term" value="P:glutathione metabolic process"/>
    <property type="evidence" value="ECO:0000314"/>
    <property type="project" value="UniProtKB"/>
</dbReference>
<dbReference type="GO" id="GO:0070813">
    <property type="term" value="P:hydrogen sulfide metabolic process"/>
    <property type="evidence" value="ECO:0000314"/>
    <property type="project" value="UniProtKB"/>
</dbReference>
<dbReference type="CDD" id="cd07724">
    <property type="entry name" value="POD-like_MBL-fold"/>
    <property type="match status" value="1"/>
</dbReference>
<dbReference type="FunFam" id="3.60.15.10:FF:000013">
    <property type="entry name" value="Persulfide dioxygenase ETHE1, mitochondrial"/>
    <property type="match status" value="1"/>
</dbReference>
<dbReference type="Gene3D" id="3.60.15.10">
    <property type="entry name" value="Ribonuclease Z/Hydroxyacylglutathione hydrolase-like"/>
    <property type="match status" value="1"/>
</dbReference>
<dbReference type="InterPro" id="IPR001279">
    <property type="entry name" value="Metallo-B-lactamas"/>
</dbReference>
<dbReference type="InterPro" id="IPR051682">
    <property type="entry name" value="Mito_Persulfide_Diox"/>
</dbReference>
<dbReference type="InterPro" id="IPR044528">
    <property type="entry name" value="POD-like_MBL-fold"/>
</dbReference>
<dbReference type="InterPro" id="IPR036866">
    <property type="entry name" value="RibonucZ/Hydroxyglut_hydro"/>
</dbReference>
<dbReference type="PANTHER" id="PTHR43084">
    <property type="entry name" value="PERSULFIDE DIOXYGENASE ETHE1"/>
    <property type="match status" value="1"/>
</dbReference>
<dbReference type="PANTHER" id="PTHR43084:SF1">
    <property type="entry name" value="PERSULFIDE DIOXYGENASE ETHE1, MITOCHONDRIAL"/>
    <property type="match status" value="1"/>
</dbReference>
<dbReference type="Pfam" id="PF00753">
    <property type="entry name" value="Lactamase_B"/>
    <property type="match status" value="1"/>
</dbReference>
<dbReference type="SMART" id="SM00849">
    <property type="entry name" value="Lactamase_B"/>
    <property type="match status" value="1"/>
</dbReference>
<dbReference type="SUPFAM" id="SSF56281">
    <property type="entry name" value="Metallo-hydrolase/oxidoreductase"/>
    <property type="match status" value="1"/>
</dbReference>
<sequence length="254" mass="27873">MAEAVLRVARRQLSQRGGSGAPILLRQMFEPVSCTFTYLLGDRESREAVLIDPVLETAPRDAQLIKELGLRLLYAVNTHCHADHITGSGLLRSLLPGCQSVISRLSGAQADLHIEDGDSIRFGRFALETRASPGHTPGCVTFVLNDHSMAFTGDALLIRGCGRTDFQQGCAKTLYHSVHEKIFTLPGDCLIYPAHDYHGFTVSTVEEERTLNPRLTLSCEEFVKIMGNLNLPKPQQIDFAVPANMRCGVQTPTA</sequence>
<protein>
    <recommendedName>
        <fullName>Persulfide dioxygenase ETHE1, mitochondrial</fullName>
        <ecNumber evidence="5 6 7">1.13.11.18</ecNumber>
    </recommendedName>
    <alternativeName>
        <fullName>Ethylmalonic encephalopathy protein 1</fullName>
    </alternativeName>
    <alternativeName>
        <fullName>Hepatoma subtracted clone one protein</fullName>
    </alternativeName>
    <alternativeName>
        <fullName>Sulfur dioxygenase ETHE1</fullName>
    </alternativeName>
</protein>